<dbReference type="EMBL" id="CP000471">
    <property type="protein sequence ID" value="ABK42892.1"/>
    <property type="molecule type" value="Genomic_DNA"/>
</dbReference>
<dbReference type="RefSeq" id="WP_011712062.1">
    <property type="nucleotide sequence ID" value="NC_008576.1"/>
</dbReference>
<dbReference type="SMR" id="A0L4J9"/>
<dbReference type="STRING" id="156889.Mmc1_0366"/>
<dbReference type="KEGG" id="mgm:Mmc1_0366"/>
<dbReference type="eggNOG" id="COG0292">
    <property type="taxonomic scope" value="Bacteria"/>
</dbReference>
<dbReference type="HOGENOM" id="CLU_123265_0_1_5"/>
<dbReference type="OrthoDB" id="9808966at2"/>
<dbReference type="Proteomes" id="UP000002586">
    <property type="component" value="Chromosome"/>
</dbReference>
<dbReference type="GO" id="GO:1990904">
    <property type="term" value="C:ribonucleoprotein complex"/>
    <property type="evidence" value="ECO:0007669"/>
    <property type="project" value="UniProtKB-KW"/>
</dbReference>
<dbReference type="GO" id="GO:0005840">
    <property type="term" value="C:ribosome"/>
    <property type="evidence" value="ECO:0007669"/>
    <property type="project" value="UniProtKB-KW"/>
</dbReference>
<dbReference type="GO" id="GO:0019843">
    <property type="term" value="F:rRNA binding"/>
    <property type="evidence" value="ECO:0007669"/>
    <property type="project" value="UniProtKB-UniRule"/>
</dbReference>
<dbReference type="GO" id="GO:0003735">
    <property type="term" value="F:structural constituent of ribosome"/>
    <property type="evidence" value="ECO:0007669"/>
    <property type="project" value="InterPro"/>
</dbReference>
<dbReference type="GO" id="GO:0000027">
    <property type="term" value="P:ribosomal large subunit assembly"/>
    <property type="evidence" value="ECO:0007669"/>
    <property type="project" value="UniProtKB-UniRule"/>
</dbReference>
<dbReference type="GO" id="GO:0006412">
    <property type="term" value="P:translation"/>
    <property type="evidence" value="ECO:0007669"/>
    <property type="project" value="InterPro"/>
</dbReference>
<dbReference type="CDD" id="cd07026">
    <property type="entry name" value="Ribosomal_L20"/>
    <property type="match status" value="1"/>
</dbReference>
<dbReference type="FunFam" id="1.10.1900.20:FF:000001">
    <property type="entry name" value="50S ribosomal protein L20"/>
    <property type="match status" value="1"/>
</dbReference>
<dbReference type="Gene3D" id="6.10.160.10">
    <property type="match status" value="1"/>
</dbReference>
<dbReference type="Gene3D" id="1.10.1900.20">
    <property type="entry name" value="Ribosomal protein L20"/>
    <property type="match status" value="1"/>
</dbReference>
<dbReference type="HAMAP" id="MF_00382">
    <property type="entry name" value="Ribosomal_bL20"/>
    <property type="match status" value="1"/>
</dbReference>
<dbReference type="InterPro" id="IPR005813">
    <property type="entry name" value="Ribosomal_bL20"/>
</dbReference>
<dbReference type="InterPro" id="IPR049946">
    <property type="entry name" value="RIBOSOMAL_L20_CS"/>
</dbReference>
<dbReference type="InterPro" id="IPR035566">
    <property type="entry name" value="Ribosomal_protein_bL20_C"/>
</dbReference>
<dbReference type="NCBIfam" id="TIGR01032">
    <property type="entry name" value="rplT_bact"/>
    <property type="match status" value="1"/>
</dbReference>
<dbReference type="PANTHER" id="PTHR10986">
    <property type="entry name" value="39S RIBOSOMAL PROTEIN L20"/>
    <property type="match status" value="1"/>
</dbReference>
<dbReference type="Pfam" id="PF00453">
    <property type="entry name" value="Ribosomal_L20"/>
    <property type="match status" value="1"/>
</dbReference>
<dbReference type="PRINTS" id="PR00062">
    <property type="entry name" value="RIBOSOMALL20"/>
</dbReference>
<dbReference type="SUPFAM" id="SSF74731">
    <property type="entry name" value="Ribosomal protein L20"/>
    <property type="match status" value="1"/>
</dbReference>
<dbReference type="PROSITE" id="PS00937">
    <property type="entry name" value="RIBOSOMAL_L20"/>
    <property type="match status" value="1"/>
</dbReference>
<sequence length="117" mass="13351">MPRVKRGVTSQARHKKVLKAAKGYTGRNNSCFRIAKQKVEKGLQYAYRDRKNLKREMRRLWIARINAATRLHGMSYSQFMNGLNKAGIELDRKVLSELAISEPESFGTLVEQAKAAL</sequence>
<keyword id="KW-1185">Reference proteome</keyword>
<keyword id="KW-0687">Ribonucleoprotein</keyword>
<keyword id="KW-0689">Ribosomal protein</keyword>
<keyword id="KW-0694">RNA-binding</keyword>
<keyword id="KW-0699">rRNA-binding</keyword>
<protein>
    <recommendedName>
        <fullName evidence="1">Large ribosomal subunit protein bL20</fullName>
    </recommendedName>
    <alternativeName>
        <fullName evidence="2">50S ribosomal protein L20</fullName>
    </alternativeName>
</protein>
<evidence type="ECO:0000255" key="1">
    <source>
        <dbReference type="HAMAP-Rule" id="MF_00382"/>
    </source>
</evidence>
<evidence type="ECO:0000305" key="2"/>
<organism>
    <name type="scientific">Magnetococcus marinus (strain ATCC BAA-1437 / JCM 17883 / MC-1)</name>
    <dbReference type="NCBI Taxonomy" id="156889"/>
    <lineage>
        <taxon>Bacteria</taxon>
        <taxon>Pseudomonadati</taxon>
        <taxon>Pseudomonadota</taxon>
        <taxon>Alphaproteobacteria</taxon>
        <taxon>Magnetococcales</taxon>
        <taxon>Magnetococcaceae</taxon>
        <taxon>Magnetococcus</taxon>
    </lineage>
</organism>
<feature type="chain" id="PRO_1000049005" description="Large ribosomal subunit protein bL20">
    <location>
        <begin position="1"/>
        <end position="117"/>
    </location>
</feature>
<reference key="1">
    <citation type="journal article" date="2009" name="Appl. Environ. Microbiol.">
        <title>Complete genome sequence of the chemolithoautotrophic marine magnetotactic coccus strain MC-1.</title>
        <authorList>
            <person name="Schubbe S."/>
            <person name="Williams T.J."/>
            <person name="Xie G."/>
            <person name="Kiss H.E."/>
            <person name="Brettin T.S."/>
            <person name="Martinez D."/>
            <person name="Ross C.A."/>
            <person name="Schuler D."/>
            <person name="Cox B.L."/>
            <person name="Nealson K.H."/>
            <person name="Bazylinski D.A."/>
        </authorList>
    </citation>
    <scope>NUCLEOTIDE SEQUENCE [LARGE SCALE GENOMIC DNA]</scope>
    <source>
        <strain>ATCC BAA-1437 / JCM 17883 / MC-1</strain>
    </source>
</reference>
<name>RL20_MAGMM</name>
<gene>
    <name evidence="1" type="primary">rplT</name>
    <name type="ordered locus">Mmc1_0366</name>
</gene>
<accession>A0L4J9</accession>
<proteinExistence type="inferred from homology"/>
<comment type="function">
    <text evidence="1">Binds directly to 23S ribosomal RNA and is necessary for the in vitro assembly process of the 50S ribosomal subunit. It is not involved in the protein synthesizing functions of that subunit.</text>
</comment>
<comment type="similarity">
    <text evidence="1">Belongs to the bacterial ribosomal protein bL20 family.</text>
</comment>